<evidence type="ECO:0000250" key="1"/>
<evidence type="ECO:0000250" key="2">
    <source>
        <dbReference type="UniProtKB" id="Q8IXM3"/>
    </source>
</evidence>
<evidence type="ECO:0000305" key="3"/>
<accession>Q9CQN7</accession>
<accession>Q8BJ44</accession>
<proteinExistence type="evidence at protein level"/>
<comment type="function">
    <text evidence="2">Component of the mitochondrial ribosome large subunit. Also involved in apoptosis and cell cycle. Enhances p53/TP53 stability, thereby contributing to p53/TP53-induced apoptosis in response to growth-inhibitory condition. Enhances p53/TP53 translocation to the mitochondria. Has the ability to arrest the cell cycle at the G1 phase, possibly by stabilizing the CDKN1A and CDKN1B (p27Kip1) proteins.</text>
</comment>
<comment type="subunit">
    <text evidence="2">Component of the mitochondrial ribosome large subunit (39S) which comprises a 16S rRNA and about 50 distinct proteins. Interacts with BCL2.</text>
</comment>
<comment type="subcellular location">
    <subcellularLocation>
        <location evidence="2">Mitochondrion</location>
    </subcellularLocation>
</comment>
<comment type="similarity">
    <text evidence="3">Belongs to the mitochondrion-specific ribosomal protein mL41 family.</text>
</comment>
<sequence>MGFLTAVTQGLVRGADRMSKWTSKRGPRTFTKSRGAKKTGIYTSDRKFVQIKEMVPEFVVPDLTGFKLKPYVNYRAPAGIDTPLTAKALFQETVAPAIEKDFKEGTFDANNLEKYGFEPTQEGKLFQLYPKNFPR</sequence>
<protein>
    <recommendedName>
        <fullName evidence="3">Large ribosomal subunit protein mL41</fullName>
    </recommendedName>
    <alternativeName>
        <fullName>39S ribosomal protein L41, mitochondrial</fullName>
        <shortName>L41mt</shortName>
        <shortName>MRP-L41</shortName>
    </alternativeName>
</protein>
<reference key="1">
    <citation type="journal article" date="2005" name="Science">
        <title>The transcriptional landscape of the mammalian genome.</title>
        <authorList>
            <person name="Carninci P."/>
            <person name="Kasukawa T."/>
            <person name="Katayama S."/>
            <person name="Gough J."/>
            <person name="Frith M.C."/>
            <person name="Maeda N."/>
            <person name="Oyama R."/>
            <person name="Ravasi T."/>
            <person name="Lenhard B."/>
            <person name="Wells C."/>
            <person name="Kodzius R."/>
            <person name="Shimokawa K."/>
            <person name="Bajic V.B."/>
            <person name="Brenner S.E."/>
            <person name="Batalov S."/>
            <person name="Forrest A.R."/>
            <person name="Zavolan M."/>
            <person name="Davis M.J."/>
            <person name="Wilming L.G."/>
            <person name="Aidinis V."/>
            <person name="Allen J.E."/>
            <person name="Ambesi-Impiombato A."/>
            <person name="Apweiler R."/>
            <person name="Aturaliya R.N."/>
            <person name="Bailey T.L."/>
            <person name="Bansal M."/>
            <person name="Baxter L."/>
            <person name="Beisel K.W."/>
            <person name="Bersano T."/>
            <person name="Bono H."/>
            <person name="Chalk A.M."/>
            <person name="Chiu K.P."/>
            <person name="Choudhary V."/>
            <person name="Christoffels A."/>
            <person name="Clutterbuck D.R."/>
            <person name="Crowe M.L."/>
            <person name="Dalla E."/>
            <person name="Dalrymple B.P."/>
            <person name="de Bono B."/>
            <person name="Della Gatta G."/>
            <person name="di Bernardo D."/>
            <person name="Down T."/>
            <person name="Engstrom P."/>
            <person name="Fagiolini M."/>
            <person name="Faulkner G."/>
            <person name="Fletcher C.F."/>
            <person name="Fukushima T."/>
            <person name="Furuno M."/>
            <person name="Futaki S."/>
            <person name="Gariboldi M."/>
            <person name="Georgii-Hemming P."/>
            <person name="Gingeras T.R."/>
            <person name="Gojobori T."/>
            <person name="Green R.E."/>
            <person name="Gustincich S."/>
            <person name="Harbers M."/>
            <person name="Hayashi Y."/>
            <person name="Hensch T.K."/>
            <person name="Hirokawa N."/>
            <person name="Hill D."/>
            <person name="Huminiecki L."/>
            <person name="Iacono M."/>
            <person name="Ikeo K."/>
            <person name="Iwama A."/>
            <person name="Ishikawa T."/>
            <person name="Jakt M."/>
            <person name="Kanapin A."/>
            <person name="Katoh M."/>
            <person name="Kawasawa Y."/>
            <person name="Kelso J."/>
            <person name="Kitamura H."/>
            <person name="Kitano H."/>
            <person name="Kollias G."/>
            <person name="Krishnan S.P."/>
            <person name="Kruger A."/>
            <person name="Kummerfeld S.K."/>
            <person name="Kurochkin I.V."/>
            <person name="Lareau L.F."/>
            <person name="Lazarevic D."/>
            <person name="Lipovich L."/>
            <person name="Liu J."/>
            <person name="Liuni S."/>
            <person name="McWilliam S."/>
            <person name="Madan Babu M."/>
            <person name="Madera M."/>
            <person name="Marchionni L."/>
            <person name="Matsuda H."/>
            <person name="Matsuzawa S."/>
            <person name="Miki H."/>
            <person name="Mignone F."/>
            <person name="Miyake S."/>
            <person name="Morris K."/>
            <person name="Mottagui-Tabar S."/>
            <person name="Mulder N."/>
            <person name="Nakano N."/>
            <person name="Nakauchi H."/>
            <person name="Ng P."/>
            <person name="Nilsson R."/>
            <person name="Nishiguchi S."/>
            <person name="Nishikawa S."/>
            <person name="Nori F."/>
            <person name="Ohara O."/>
            <person name="Okazaki Y."/>
            <person name="Orlando V."/>
            <person name="Pang K.C."/>
            <person name="Pavan W.J."/>
            <person name="Pavesi G."/>
            <person name="Pesole G."/>
            <person name="Petrovsky N."/>
            <person name="Piazza S."/>
            <person name="Reed J."/>
            <person name="Reid J.F."/>
            <person name="Ring B.Z."/>
            <person name="Ringwald M."/>
            <person name="Rost B."/>
            <person name="Ruan Y."/>
            <person name="Salzberg S.L."/>
            <person name="Sandelin A."/>
            <person name="Schneider C."/>
            <person name="Schoenbach C."/>
            <person name="Sekiguchi K."/>
            <person name="Semple C.A."/>
            <person name="Seno S."/>
            <person name="Sessa L."/>
            <person name="Sheng Y."/>
            <person name="Shibata Y."/>
            <person name="Shimada H."/>
            <person name="Shimada K."/>
            <person name="Silva D."/>
            <person name="Sinclair B."/>
            <person name="Sperling S."/>
            <person name="Stupka E."/>
            <person name="Sugiura K."/>
            <person name="Sultana R."/>
            <person name="Takenaka Y."/>
            <person name="Taki K."/>
            <person name="Tammoja K."/>
            <person name="Tan S.L."/>
            <person name="Tang S."/>
            <person name="Taylor M.S."/>
            <person name="Tegner J."/>
            <person name="Teichmann S.A."/>
            <person name="Ueda H.R."/>
            <person name="van Nimwegen E."/>
            <person name="Verardo R."/>
            <person name="Wei C.L."/>
            <person name="Yagi K."/>
            <person name="Yamanishi H."/>
            <person name="Zabarovsky E."/>
            <person name="Zhu S."/>
            <person name="Zimmer A."/>
            <person name="Hide W."/>
            <person name="Bult C."/>
            <person name="Grimmond S.M."/>
            <person name="Teasdale R.D."/>
            <person name="Liu E.T."/>
            <person name="Brusic V."/>
            <person name="Quackenbush J."/>
            <person name="Wahlestedt C."/>
            <person name="Mattick J.S."/>
            <person name="Hume D.A."/>
            <person name="Kai C."/>
            <person name="Sasaki D."/>
            <person name="Tomaru Y."/>
            <person name="Fukuda S."/>
            <person name="Kanamori-Katayama M."/>
            <person name="Suzuki M."/>
            <person name="Aoki J."/>
            <person name="Arakawa T."/>
            <person name="Iida J."/>
            <person name="Imamura K."/>
            <person name="Itoh M."/>
            <person name="Kato T."/>
            <person name="Kawaji H."/>
            <person name="Kawagashira N."/>
            <person name="Kawashima T."/>
            <person name="Kojima M."/>
            <person name="Kondo S."/>
            <person name="Konno H."/>
            <person name="Nakano K."/>
            <person name="Ninomiya N."/>
            <person name="Nishio T."/>
            <person name="Okada M."/>
            <person name="Plessy C."/>
            <person name="Shibata K."/>
            <person name="Shiraki T."/>
            <person name="Suzuki S."/>
            <person name="Tagami M."/>
            <person name="Waki K."/>
            <person name="Watahiki A."/>
            <person name="Okamura-Oho Y."/>
            <person name="Suzuki H."/>
            <person name="Kawai J."/>
            <person name="Hayashizaki Y."/>
        </authorList>
    </citation>
    <scope>NUCLEOTIDE SEQUENCE [LARGE SCALE MRNA]</scope>
    <source>
        <strain>C57BL/6J</strain>
        <tissue>Olfactory bulb</tissue>
    </source>
</reference>
<reference key="2">
    <citation type="journal article" date="2004" name="Genome Res.">
        <title>The status, quality, and expansion of the NIH full-length cDNA project: the Mammalian Gene Collection (MGC).</title>
        <authorList>
            <consortium name="The MGC Project Team"/>
        </authorList>
    </citation>
    <scope>NUCLEOTIDE SEQUENCE [LARGE SCALE MRNA]</scope>
    <source>
        <strain>FVB/N</strain>
        <tissue>Mammary tumor</tissue>
    </source>
</reference>
<reference key="3">
    <citation type="journal article" date="2010" name="Cell">
        <title>A tissue-specific atlas of mouse protein phosphorylation and expression.</title>
        <authorList>
            <person name="Huttlin E.L."/>
            <person name="Jedrychowski M.P."/>
            <person name="Elias J.E."/>
            <person name="Goswami T."/>
            <person name="Rad R."/>
            <person name="Beausoleil S.A."/>
            <person name="Villen J."/>
            <person name="Haas W."/>
            <person name="Sowa M.E."/>
            <person name="Gygi S.P."/>
        </authorList>
    </citation>
    <scope>IDENTIFICATION BY MASS SPECTROMETRY [LARGE SCALE ANALYSIS]</scope>
    <source>
        <tissue>Brain</tissue>
        <tissue>Brown adipose tissue</tissue>
        <tissue>Heart</tissue>
        <tissue>Kidney</tissue>
        <tissue>Liver</tissue>
        <tissue>Pancreas</tissue>
        <tissue>Spleen</tissue>
        <tissue>Testis</tissue>
    </source>
</reference>
<feature type="transit peptide" description="Mitochondrion" evidence="1">
    <location>
        <begin position="1"/>
        <end position="13"/>
    </location>
</feature>
<feature type="chain" id="PRO_0000273229" description="Large ribosomal subunit protein mL41">
    <location>
        <begin position="14"/>
        <end position="135"/>
    </location>
</feature>
<feature type="sequence conflict" description="In Ref. 1; BAC27838." evidence="3" ref="1">
    <original>A</original>
    <variation>S</variation>
    <location>
        <position position="76"/>
    </location>
</feature>
<feature type="sequence conflict" description="In Ref. 1; BAC27838." evidence="3" ref="1">
    <original>F</original>
    <variation>I</variation>
    <location>
        <position position="102"/>
    </location>
</feature>
<gene>
    <name type="primary">Mrpl41</name>
</gene>
<dbReference type="EMBL" id="AK003340">
    <property type="protein sequence ID" value="BAB22727.1"/>
    <property type="molecule type" value="mRNA"/>
</dbReference>
<dbReference type="EMBL" id="AK011837">
    <property type="protein sequence ID" value="BAB27870.1"/>
    <property type="molecule type" value="mRNA"/>
</dbReference>
<dbReference type="EMBL" id="AK032370">
    <property type="protein sequence ID" value="BAC27838.1"/>
    <property type="molecule type" value="mRNA"/>
</dbReference>
<dbReference type="EMBL" id="BC034728">
    <property type="protein sequence ID" value="AAH34728.1"/>
    <property type="molecule type" value="mRNA"/>
</dbReference>
<dbReference type="CCDS" id="CCDS15744.1"/>
<dbReference type="RefSeq" id="NP_001026978.2">
    <property type="nucleotide sequence ID" value="NM_001031808.2"/>
</dbReference>
<dbReference type="SMR" id="Q9CQN7"/>
<dbReference type="BioGRID" id="223526">
    <property type="interactions" value="6"/>
</dbReference>
<dbReference type="ComplexPortal" id="CPX-5302">
    <property type="entry name" value="39S mitochondrial large ribosomal subunit"/>
</dbReference>
<dbReference type="FunCoup" id="Q9CQN7">
    <property type="interactions" value="229"/>
</dbReference>
<dbReference type="STRING" id="10090.ENSMUSP00000043561"/>
<dbReference type="iPTMnet" id="Q9CQN7"/>
<dbReference type="PhosphoSitePlus" id="Q9CQN7"/>
<dbReference type="jPOST" id="Q9CQN7"/>
<dbReference type="PaxDb" id="10090-ENSMUSP00000043561"/>
<dbReference type="PeptideAtlas" id="Q9CQN7"/>
<dbReference type="ProteomicsDB" id="299860"/>
<dbReference type="Pumba" id="Q9CQN7"/>
<dbReference type="Antibodypedia" id="19072">
    <property type="antibodies" value="151 antibodies from 23 providers"/>
</dbReference>
<dbReference type="DNASU" id="107733"/>
<dbReference type="Ensembl" id="ENSMUST00000045604.4">
    <property type="protein sequence ID" value="ENSMUSP00000043561.4"/>
    <property type="gene ID" value="ENSMUSG00000036850.5"/>
</dbReference>
<dbReference type="GeneID" id="107733"/>
<dbReference type="KEGG" id="mmu:107733"/>
<dbReference type="UCSC" id="uc008ipu.1">
    <property type="organism name" value="mouse"/>
</dbReference>
<dbReference type="AGR" id="MGI:1333816"/>
<dbReference type="CTD" id="64975"/>
<dbReference type="MGI" id="MGI:1333816">
    <property type="gene designation" value="Mrpl41"/>
</dbReference>
<dbReference type="VEuPathDB" id="HostDB:ENSMUSG00000036850"/>
<dbReference type="eggNOG" id="KOG4756">
    <property type="taxonomic scope" value="Eukaryota"/>
</dbReference>
<dbReference type="GeneTree" id="ENSGT00390000013158"/>
<dbReference type="HOGENOM" id="CLU_155983_0_0_1"/>
<dbReference type="InParanoid" id="Q9CQN7"/>
<dbReference type="OMA" id="DRMSAWT"/>
<dbReference type="OrthoDB" id="408933at2759"/>
<dbReference type="PhylomeDB" id="Q9CQN7"/>
<dbReference type="TreeFam" id="TF325007"/>
<dbReference type="Reactome" id="R-MMU-5389840">
    <property type="pathway name" value="Mitochondrial translation elongation"/>
</dbReference>
<dbReference type="Reactome" id="R-MMU-5419276">
    <property type="pathway name" value="Mitochondrial translation termination"/>
</dbReference>
<dbReference type="BioGRID-ORCS" id="107733">
    <property type="hits" value="22 hits in 82 CRISPR screens"/>
</dbReference>
<dbReference type="ChiTaRS" id="Mrpl41">
    <property type="organism name" value="mouse"/>
</dbReference>
<dbReference type="PRO" id="PR:Q9CQN7"/>
<dbReference type="Proteomes" id="UP000000589">
    <property type="component" value="Chromosome 2"/>
</dbReference>
<dbReference type="RNAct" id="Q9CQN7">
    <property type="molecule type" value="protein"/>
</dbReference>
<dbReference type="Bgee" id="ENSMUSG00000036850">
    <property type="expression patterns" value="Expressed in facial nucleus and 265 other cell types or tissues"/>
</dbReference>
<dbReference type="ExpressionAtlas" id="Q9CQN7">
    <property type="expression patterns" value="baseline and differential"/>
</dbReference>
<dbReference type="GO" id="GO:0005743">
    <property type="term" value="C:mitochondrial inner membrane"/>
    <property type="evidence" value="ECO:0000303"/>
    <property type="project" value="ComplexPortal"/>
</dbReference>
<dbReference type="GO" id="GO:0005762">
    <property type="term" value="C:mitochondrial large ribosomal subunit"/>
    <property type="evidence" value="ECO:0000250"/>
    <property type="project" value="UniProtKB"/>
</dbReference>
<dbReference type="GO" id="GO:0005739">
    <property type="term" value="C:mitochondrion"/>
    <property type="evidence" value="ECO:0007005"/>
    <property type="project" value="MGI"/>
</dbReference>
<dbReference type="GO" id="GO:1990904">
    <property type="term" value="C:ribonucleoprotein complex"/>
    <property type="evidence" value="ECO:0000250"/>
    <property type="project" value="UniProtKB"/>
</dbReference>
<dbReference type="GO" id="GO:0003735">
    <property type="term" value="F:structural constituent of ribosome"/>
    <property type="evidence" value="ECO:0000250"/>
    <property type="project" value="UniProtKB"/>
</dbReference>
<dbReference type="GO" id="GO:0006915">
    <property type="term" value="P:apoptotic process"/>
    <property type="evidence" value="ECO:0007669"/>
    <property type="project" value="UniProtKB-KW"/>
</dbReference>
<dbReference type="GO" id="GO:0032543">
    <property type="term" value="P:mitochondrial translation"/>
    <property type="evidence" value="ECO:0000303"/>
    <property type="project" value="ComplexPortal"/>
</dbReference>
<dbReference type="GO" id="GO:0006412">
    <property type="term" value="P:translation"/>
    <property type="evidence" value="ECO:0000250"/>
    <property type="project" value="UniProtKB"/>
</dbReference>
<dbReference type="InterPro" id="IPR019189">
    <property type="entry name" value="Ribosomal_mL41"/>
</dbReference>
<dbReference type="PANTHER" id="PTHR21338:SF0">
    <property type="entry name" value="LARGE RIBOSOMAL SUBUNIT PROTEIN ML41"/>
    <property type="match status" value="1"/>
</dbReference>
<dbReference type="PANTHER" id="PTHR21338">
    <property type="entry name" value="MITOCHONDRIAL RIBOSOMAL PROTEIN L41"/>
    <property type="match status" value="1"/>
</dbReference>
<dbReference type="Pfam" id="PF09809">
    <property type="entry name" value="MRP-L27"/>
    <property type="match status" value="1"/>
</dbReference>
<organism>
    <name type="scientific">Mus musculus</name>
    <name type="common">Mouse</name>
    <dbReference type="NCBI Taxonomy" id="10090"/>
    <lineage>
        <taxon>Eukaryota</taxon>
        <taxon>Metazoa</taxon>
        <taxon>Chordata</taxon>
        <taxon>Craniata</taxon>
        <taxon>Vertebrata</taxon>
        <taxon>Euteleostomi</taxon>
        <taxon>Mammalia</taxon>
        <taxon>Eutheria</taxon>
        <taxon>Euarchontoglires</taxon>
        <taxon>Glires</taxon>
        <taxon>Rodentia</taxon>
        <taxon>Myomorpha</taxon>
        <taxon>Muroidea</taxon>
        <taxon>Muridae</taxon>
        <taxon>Murinae</taxon>
        <taxon>Mus</taxon>
        <taxon>Mus</taxon>
    </lineage>
</organism>
<keyword id="KW-0053">Apoptosis</keyword>
<keyword id="KW-0131">Cell cycle</keyword>
<keyword id="KW-0496">Mitochondrion</keyword>
<keyword id="KW-1185">Reference proteome</keyword>
<keyword id="KW-0687">Ribonucleoprotein</keyword>
<keyword id="KW-0689">Ribosomal protein</keyword>
<keyword id="KW-0809">Transit peptide</keyword>
<name>RM41_MOUSE</name>